<organism>
    <name type="scientific">Rattus norvegicus</name>
    <name type="common">Rat</name>
    <dbReference type="NCBI Taxonomy" id="10116"/>
    <lineage>
        <taxon>Eukaryota</taxon>
        <taxon>Metazoa</taxon>
        <taxon>Chordata</taxon>
        <taxon>Craniata</taxon>
        <taxon>Vertebrata</taxon>
        <taxon>Euteleostomi</taxon>
        <taxon>Mammalia</taxon>
        <taxon>Eutheria</taxon>
        <taxon>Euarchontoglires</taxon>
        <taxon>Glires</taxon>
        <taxon>Rodentia</taxon>
        <taxon>Myomorpha</taxon>
        <taxon>Muroidea</taxon>
        <taxon>Muridae</taxon>
        <taxon>Murinae</taxon>
        <taxon>Rattus</taxon>
    </lineage>
</organism>
<protein>
    <recommendedName>
        <fullName>Insulin receptor substrate 1</fullName>
        <shortName>IRS-1</shortName>
    </recommendedName>
    <alternativeName>
        <fullName>pp185</fullName>
    </alternativeName>
</protein>
<gene>
    <name type="primary">Irs1</name>
    <name type="synonym">Irs-1</name>
</gene>
<feature type="chain" id="PRO_0000084238" description="Insulin receptor substrate 1">
    <location>
        <begin position="1"/>
        <end position="1235"/>
    </location>
</feature>
<feature type="domain" description="PH" evidence="3">
    <location>
        <begin position="12"/>
        <end position="115"/>
    </location>
</feature>
<feature type="domain" description="IRS-type PTB" evidence="4">
    <location>
        <begin position="155"/>
        <end position="259"/>
    </location>
</feature>
<feature type="region of interest" description="Mediates interaction with PHIP" evidence="6">
    <location>
        <begin position="3"/>
        <end position="133"/>
    </location>
</feature>
<feature type="region of interest" description="Disordered" evidence="5">
    <location>
        <begin position="258"/>
        <end position="425"/>
    </location>
</feature>
<feature type="region of interest" description="Disordered" evidence="5">
    <location>
        <begin position="520"/>
        <end position="539"/>
    </location>
</feature>
<feature type="region of interest" description="Disordered" evidence="5">
    <location>
        <begin position="669"/>
        <end position="720"/>
    </location>
</feature>
<feature type="region of interest" description="Disordered" evidence="5">
    <location>
        <begin position="766"/>
        <end position="921"/>
    </location>
</feature>
<feature type="region of interest" description="GRB2-binding">
    <location>
        <begin position="895"/>
        <end position="897"/>
    </location>
</feature>
<feature type="region of interest" description="Disordered" evidence="5">
    <location>
        <begin position="1024"/>
        <end position="1165"/>
    </location>
</feature>
<feature type="region of interest" description="Disordered" evidence="5">
    <location>
        <begin position="1177"/>
        <end position="1235"/>
    </location>
</feature>
<feature type="short sequence motif" description="YXXM motif 1">
    <location>
        <begin position="460"/>
        <end position="463"/>
    </location>
</feature>
<feature type="short sequence motif" description="YXXM motif 2">
    <location>
        <begin position="546"/>
        <end position="549"/>
    </location>
</feature>
<feature type="short sequence motif" description="YXXM motif 3">
    <location>
        <begin position="608"/>
        <end position="611"/>
    </location>
</feature>
<feature type="short sequence motif" description="YXXM motif 4">
    <location>
        <begin position="628"/>
        <end position="631"/>
    </location>
</feature>
<feature type="short sequence motif" description="YXXM motif 5">
    <location>
        <begin position="658"/>
        <end position="661"/>
    </location>
</feature>
<feature type="short sequence motif" description="YXXM motif 6">
    <location>
        <begin position="727"/>
        <end position="730"/>
    </location>
</feature>
<feature type="short sequence motif" description="YXXM motif 7">
    <location>
        <begin position="939"/>
        <end position="942"/>
    </location>
</feature>
<feature type="short sequence motif" description="YXXM motif 8">
    <location>
        <begin position="987"/>
        <end position="990"/>
    </location>
</feature>
<feature type="short sequence motif" description="YXXM motif 9">
    <location>
        <begin position="1010"/>
        <end position="1013"/>
    </location>
</feature>
<feature type="compositionally biased region" description="Low complexity" evidence="5">
    <location>
        <begin position="265"/>
        <end position="276"/>
    </location>
</feature>
<feature type="compositionally biased region" description="Basic residues" evidence="5">
    <location>
        <begin position="349"/>
        <end position="358"/>
    </location>
</feature>
<feature type="compositionally biased region" description="Low complexity" evidence="5">
    <location>
        <begin position="378"/>
        <end position="399"/>
    </location>
</feature>
<feature type="compositionally biased region" description="Low complexity" evidence="5">
    <location>
        <begin position="407"/>
        <end position="419"/>
    </location>
</feature>
<feature type="compositionally biased region" description="Polar residues" evidence="5">
    <location>
        <begin position="522"/>
        <end position="539"/>
    </location>
</feature>
<feature type="compositionally biased region" description="Low complexity" evidence="5">
    <location>
        <begin position="669"/>
        <end position="689"/>
    </location>
</feature>
<feature type="compositionally biased region" description="Basic and acidic residues" evidence="5">
    <location>
        <begin position="771"/>
        <end position="780"/>
    </location>
</feature>
<feature type="compositionally biased region" description="Low complexity" evidence="5">
    <location>
        <begin position="785"/>
        <end position="794"/>
    </location>
</feature>
<feature type="compositionally biased region" description="Low complexity" evidence="5">
    <location>
        <begin position="801"/>
        <end position="810"/>
    </location>
</feature>
<feature type="compositionally biased region" description="Low complexity" evidence="5">
    <location>
        <begin position="872"/>
        <end position="881"/>
    </location>
</feature>
<feature type="compositionally biased region" description="Low complexity" evidence="5">
    <location>
        <begin position="1025"/>
        <end position="1046"/>
    </location>
</feature>
<feature type="compositionally biased region" description="Polar residues" evidence="5">
    <location>
        <begin position="1072"/>
        <end position="1084"/>
    </location>
</feature>
<feature type="compositionally biased region" description="Polar residues" evidence="5">
    <location>
        <begin position="1101"/>
        <end position="1114"/>
    </location>
</feature>
<feature type="compositionally biased region" description="Gly residues" evidence="5">
    <location>
        <begin position="1118"/>
        <end position="1128"/>
    </location>
</feature>
<feature type="compositionally biased region" description="Polar residues" evidence="5">
    <location>
        <begin position="1204"/>
        <end position="1229"/>
    </location>
</feature>
<feature type="modified residue" description="Phosphoserine" evidence="19">
    <location>
        <position position="3"/>
    </location>
</feature>
<feature type="modified residue" description="Phosphoserine; by CK2" evidence="16">
    <location>
        <position position="99"/>
    </location>
</feature>
<feature type="modified residue" description="Phosphoserine; by RPS6KB1" evidence="1">
    <location>
        <position position="265"/>
    </location>
</feature>
<feature type="modified residue" description="Phosphoserine; by RPS6KB1" evidence="1">
    <location>
        <position position="302"/>
    </location>
</feature>
<feature type="modified residue" description="Phosphoserine; by IKKB, MAPK8 and RPS6KB1" evidence="1">
    <location>
        <position position="307"/>
    </location>
</feature>
<feature type="modified residue" description="Phosphoserine" evidence="1">
    <location>
        <position position="318"/>
    </location>
</feature>
<feature type="modified residue" description="Phosphoserine" evidence="2">
    <location>
        <position position="325"/>
    </location>
</feature>
<feature type="modified residue" description="Phosphoserine" evidence="2">
    <location>
        <position position="340"/>
    </location>
</feature>
<feature type="modified residue" description="Phosphoserine" evidence="19">
    <location>
        <position position="343"/>
    </location>
</feature>
<feature type="modified residue" description="Phosphoserine" evidence="2">
    <location>
        <position position="414"/>
    </location>
</feature>
<feature type="modified residue" description="Phosphothreonine" evidence="19">
    <location>
        <position position="441"/>
    </location>
</feature>
<feature type="modified residue" description="Phosphothreonine" evidence="19">
    <location>
        <position position="448"/>
    </location>
</feature>
<feature type="modified residue" description="Phosphotyrosine; by INSR" evidence="15">
    <location>
        <position position="460"/>
    </location>
</feature>
<feature type="modified residue" description="Phosphothreonine; by CK2" evidence="16">
    <location>
        <position position="502"/>
    </location>
</feature>
<feature type="modified residue" description="Phosphoserine; by RPS6KB1" evidence="1">
    <location>
        <position position="522"/>
    </location>
</feature>
<feature type="modified residue" description="Phosphotyrosine; by INSR" evidence="15">
    <location>
        <position position="608"/>
    </location>
</feature>
<feature type="modified residue" description="Phosphoserine" evidence="12">
    <location>
        <position position="612"/>
    </location>
</feature>
<feature type="modified residue" description="Phosphotyrosine; by INSR" evidence="15">
    <location>
        <position position="628"/>
    </location>
</feature>
<feature type="modified residue" description="Phosphoserine; by RPS6KB1 and ROCK2" evidence="2">
    <location>
        <position position="632"/>
    </location>
</feature>
<feature type="modified residue" description="Phosphotyrosine" evidence="1">
    <location>
        <position position="658"/>
    </location>
</feature>
<feature type="modified residue" description="Phosphoserine; by AMPK and SIK2" evidence="9">
    <location>
        <position position="789"/>
    </location>
</feature>
<feature type="modified residue" description="Phosphoserine" evidence="19">
    <location>
        <position position="891"/>
    </location>
</feature>
<feature type="modified residue" description="Phosphotyrosine; by INSR" evidence="15">
    <location>
        <position position="895"/>
    </location>
</feature>
<feature type="modified residue" description="Phosphotyrosine; by INSR" evidence="15">
    <location>
        <position position="939"/>
    </location>
</feature>
<feature type="modified residue" description="Phosphotyrosine; by INSR" evidence="15">
    <location>
        <position position="987"/>
    </location>
</feature>
<feature type="modified residue" description="Phosphoserine" evidence="2">
    <location>
        <position position="1099"/>
    </location>
</feature>
<feature type="modified residue" description="Phosphoserine; by RPS6KB1" evidence="1">
    <location>
        <position position="1100"/>
    </location>
</feature>
<feature type="modified residue" description="Phosphotyrosine; by INSR" evidence="15">
    <location>
        <position position="1172"/>
    </location>
</feature>
<feature type="modified residue" description="Phosphotyrosine; by INSR" evidence="15">
    <location>
        <position position="1222"/>
    </location>
</feature>
<feature type="cross-link" description="Glycyl lysine isopeptide (Lys-Gly) (interchain with G-Cter in ubiquitin)" evidence="1">
    <location>
        <position position="1179"/>
    </location>
</feature>
<feature type="mutagenesis site" description="Loss of interaction with PHIP." evidence="6">
    <original>W</original>
    <variation>A</variation>
    <location>
        <position position="106"/>
    </location>
</feature>
<feature type="sequence conflict" description="In Ref. 2; AA sequence." evidence="18" ref="2">
    <original>H</original>
    <variation>L</variation>
    <location>
        <position position="1098"/>
    </location>
</feature>
<accession>P35570</accession>
<sequence length="1235" mass="131178">MASPPDTDGFSDVRKVGYLRKPKSMHKRFFVLRAASEAGGPARLEYYENEKKWRHKSSAPKRSIPLESCFNINKRADSKNKHLVALYTRDEHFAIAADSEAEQDSWYQALLQLHNRAKAHHDGAGGGCGGSCSGSSGVGEAGEDLSYDTGPGPAFKEVWQVILKPKGLGQTKNLIGIYRLCLTSKTISFVKLNSEAAAVVLQLMNIRRCGHSENFFFIEVGRSAVTGPGEFWMQVDDSVVAQNMHETILEAMRAMSDEFRPRTKSQSSSSCSNPISVPLRRHHLNNPPPSQVGLTRRSRTESITATSPASMVGGKPGSFRVRASSDGEGTMSRPASVDGSPVSPSTNRTHAHRHRGSSRLHPPLNHSRSIPMPSSRCSPSATSPVSLSSSSTSGHGSTSDCLFPRRSSASVSGSPSDGGFISSDEYGSSPCDFRSSFRSVTPDSLGHTPPARGEEELSNYICMGGKGASTLTAPNGHYILSRGGNGHRYIPGATMGTSPALTGDEAAGAADLDNRFRKRTHSAGTSPTISHQKTPSQSSVVSIEEYTEMMPAAYPPGGGSGGRLPGYRHSAFVPTHSYPEEGLEMHHLERRGGHHRPDSSNLHTDDGYMPMSPGVAPVPSNRKGNGDYMPMSPKSVSAPQQIINPIRRHPQRVDPNGYMMMSPSGSCSPDIGGGSCSSSSISAAPSGSSYGKPWTNGVGGHHTHALPHAKPPVESGGGKLLPCTGDYMNMSPVGDSNTSSPSECYYGPEDPQHKPVLSYYSLPRSFKHTQRPGEPEEGARHQHLRLSSSSGRLRYTATAEDSSSSTSSDSLGGGYCGARPESSVTHPHHHALQPHLPRKVDTAAQTNSRLARPTRLSLGDPKASTLPRVREQQQQQQQQQQSSLHPPEPKSPGEYVNIEFGSGQPGYLAGPATSRSSPSVRCLPQLHPAPREETGSEEYMNMDLGPGRRATWQESGGVELGRVGPAPPGAASICRPTRSVPNSRGDYMTMQIGCPRQSYVDTSPVAPVSYADMRTGIAAEKVSLPRTTGAAPPPSSTASASASVTPQGAAEQAAHSSLLGGPQGPGGMSAFTRVNLSPNHNQSAKVIRADTQGCRRRHSSETFSAPTRAANTVSFGAGAAGGGSGGGSEDVKRHSSASFENVWLRPGDLGGASKESAPGCGAAGGLEKSLNYIDLDLVKDVKQHPQDCPSQQQSLPPPPPHQPLGSNEGSSPRRSSEDLSTYASINFQKQPEDRQ</sequence>
<name>IRS1_RAT</name>
<reference key="1">
    <citation type="journal article" date="1991" name="Nature">
        <title>Structure of the insulin receptor substrate IRS-1 defines a unique signal transduction protein.</title>
        <authorList>
            <person name="Sun X.-J."/>
            <person name="Rothenberg P.L."/>
            <person name="Kahn C.R."/>
            <person name="Backer J.M."/>
            <person name="Araki E."/>
            <person name="Wilden P.A."/>
            <person name="Cahill D.A."/>
            <person name="Goldstein B.J."/>
            <person name="White M.F."/>
        </authorList>
    </citation>
    <scope>NUCLEOTIDE SEQUENCE [MRNA]</scope>
    <scope>PARTIAL PROTEIN SEQUENCE</scope>
    <source>
        <strain>Sprague-Dawley</strain>
        <tissue>Liver</tissue>
    </source>
</reference>
<reference key="2">
    <citation type="journal article" date="1991" name="J. Biol. Chem.">
        <title>Purification and partial sequence analysis of pp185, the major cellular substrate of the insulin receptor tyrosine kinase.</title>
        <authorList>
            <person name="Rothenberg P.L."/>
            <person name="Lane W.S."/>
            <person name="Karasik A."/>
            <person name="Backer J.M."/>
            <person name="White M.F."/>
            <person name="Kahn C.R."/>
        </authorList>
    </citation>
    <scope>PROTEIN SEQUENCE OF 44-51; 173-178; 223-243; 489-506; 635-646; 932-947 AND 1098-1106</scope>
</reference>
<reference key="3">
    <citation type="journal article" date="1992" name="EMBO J.">
        <title>Phosphatidylinositol 3'-kinase is activated by association with IRS-1 during insulin stimulation.</title>
        <authorList>
            <person name="Backer J.M."/>
            <person name="Myers M.G. Jr."/>
            <person name="Shoelson S.E."/>
            <person name="Chin D.J."/>
            <person name="Sun X.-J."/>
            <person name="Miralpeix M."/>
            <person name="Hu P."/>
            <person name="Margolis B."/>
            <person name="Skolnik E.Y."/>
            <person name="Schlessinger J."/>
            <person name="White M.F."/>
        </authorList>
    </citation>
    <scope>FUNCTION</scope>
    <scope>PHOSPHORYLATION</scope>
    <scope>INTERACTION WITH PIK3R1</scope>
</reference>
<reference key="4">
    <citation type="journal article" date="1993" name="EMBO J.">
        <title>The SH2/SH3 domain-containing protein GRB2 interacts with tyrosine-phosphorylated IRS1 and Shc: implications for insulin control of ras signalling.</title>
        <authorList>
            <person name="Skolnik E.Y."/>
            <person name="Lee C.-H."/>
            <person name="Batzer A.G."/>
            <person name="Vicentini L.M."/>
            <person name="Zhou M."/>
            <person name="Daly R.J."/>
            <person name="Myers M.J. Jr."/>
            <person name="Backer J.M."/>
            <person name="Ullrich A."/>
            <person name="White M.F."/>
            <person name="Schlessinger J."/>
        </authorList>
    </citation>
    <scope>INTERACTION WITH GRB2</scope>
    <scope>FUNCTION</scope>
</reference>
<reference key="5">
    <citation type="journal article" date="1993" name="Mol. Cell. Biol.">
        <title>Pleiotropic insulin signals are engaged by multisite phosphorylation of IRS-1.</title>
        <authorList>
            <person name="Sun X.-J."/>
            <person name="Crimmins D.L."/>
            <person name="Myers M.G. Jr."/>
            <person name="Miralpeix M."/>
            <person name="White M.F."/>
        </authorList>
    </citation>
    <scope>PHOSPHORYLATION AT TYR-460; TYR-608; TYR-628; TYR-895; TYR-939; TYR-987; TYR-1172 AND TYR-1222</scope>
</reference>
<reference key="6">
    <citation type="journal article" date="1993" name="J. Biol. Chem.">
        <title>Phosphorylation of the insulin receptor substrate IRS-1 by casein kinase II.</title>
        <authorList>
            <person name="Tanasijevic M.J."/>
            <person name="Myers M.G. Jr."/>
            <person name="Thoma R.S."/>
            <person name="Crimmins D.L."/>
            <person name="White M.F."/>
            <person name="Sacks D.B."/>
        </authorList>
    </citation>
    <scope>PHOSPHORYLATION AT SER-99 AND THR-502</scope>
</reference>
<reference key="7">
    <citation type="journal article" date="2000" name="J. Biol. Chem.">
        <title>Cloning and characterization of PHIP, a novel insulin receptor substrate-1 pleckstrin homology domain interacting protein.</title>
        <authorList>
            <person name="Farhang-Fallah J."/>
            <person name="Yin X."/>
            <person name="Trentin G."/>
            <person name="Cheng A.M."/>
            <person name="Rozakis-Adcock M."/>
        </authorList>
    </citation>
    <scope>INTERACTION WITH PHIP</scope>
    <scope>MUTAGENESIS OF TRP-106</scope>
</reference>
<reference key="8">
    <citation type="journal article" date="2002" name="J. Biol. Chem.">
        <title>Phosphorylation of Ser307 in insulin receptor substrate-1 blocks interactions with the insulin receptor and inhibits insulin action.</title>
        <authorList>
            <person name="Aguirre V."/>
            <person name="Werner E.D."/>
            <person name="Giraud J."/>
            <person name="Lee Y.H."/>
            <person name="Shoelson S.E."/>
            <person name="White M.F."/>
        </authorList>
    </citation>
    <scope>PHOSPHORYLATION AT SER-307</scope>
</reference>
<reference key="9">
    <citation type="journal article" date="2002" name="J. Biol. Chem.">
        <title>In vivo phosphorylation of insulin receptor substrate 1 at serine 789 by a novel serine kinase in insulin-resistant rodents.</title>
        <authorList>
            <person name="Qiao L.Y."/>
            <person name="Zhande R."/>
            <person name="Jetton T.L."/>
            <person name="Zhou G."/>
            <person name="Sun X.-J."/>
        </authorList>
    </citation>
    <scope>PHOSPHORYLATION AT SER-789</scope>
</reference>
<reference key="10">
    <citation type="journal article" date="2002" name="J. Biol. Chem.">
        <title>Active Rho kinase (ROK-alpha) associates with insulin receptor substrate-1 and inhibits insulin signaling in vascular smooth muscle cells.</title>
        <authorList>
            <person name="Begum N."/>
            <person name="Sandu O.A."/>
            <person name="Ito M."/>
            <person name="Lohmann S.M."/>
            <person name="Smolenski A."/>
        </authorList>
    </citation>
    <scope>INTERACTION WITH ROCK1</scope>
    <scope>PHOSPHORYLATION</scope>
</reference>
<reference key="11">
    <citation type="journal article" date="2002" name="Endocrinology">
        <title>Insulin receptor substrate-1 is present in hepatocyte nuclei from intact rats.</title>
        <authorList>
            <person name="Boylan J.M."/>
            <person name="Gruppuso P.A."/>
        </authorList>
    </citation>
    <scope>FUNCTION</scope>
    <scope>SUBCELLULAR LOCATION</scope>
</reference>
<reference key="12">
    <citation type="journal article" date="2012" name="Nat. Commun.">
        <title>Quantitative maps of protein phosphorylation sites across 14 different rat organs and tissues.</title>
        <authorList>
            <person name="Lundby A."/>
            <person name="Secher A."/>
            <person name="Lage K."/>
            <person name="Nordsborg N.B."/>
            <person name="Dmytriyev A."/>
            <person name="Lundby C."/>
            <person name="Olsen J.V."/>
        </authorList>
    </citation>
    <scope>PHOSPHORYLATION [LARGE SCALE ANALYSIS] AT SER-3; SER-343; THR-441; THR-448 AND SER-891</scope>
    <scope>IDENTIFICATION BY MASS SPECTROMETRY [LARGE SCALE ANALYSIS]</scope>
</reference>
<reference key="13">
    <citation type="journal article" date="2013" name="J. Biol. Chem.">
        <title>Skeletal muscle-derived myonectin activates the mammalian target of rapamycin (mTOR) pathway to suppress autophagy in liver.</title>
        <authorList>
            <person name="Seldin M.M."/>
            <person name="Lei X."/>
            <person name="Tan S.Y."/>
            <person name="Stanson K.P."/>
            <person name="Wei Z."/>
            <person name="Wong G.W."/>
        </authorList>
    </citation>
    <scope>PHOSPHORYLATION AT SER-612</scope>
</reference>
<reference key="14">
    <citation type="journal article" date="2015" name="J. Biol. Chem.">
        <title>Tumor necrosis factor (TNF)-alpha-induced repression of GKAP42 protein levels through cGMP-dependent kinase (cGK)-Ialpha causes insulin resistance in 3T3-L1 adipocytes.</title>
        <authorList>
            <person name="Ando Y."/>
            <person name="Shinozawa Y."/>
            <person name="Iijima Y."/>
            <person name="Yu B.C."/>
            <person name="Sone M."/>
            <person name="Ooi Y."/>
            <person name="Watanaka Y."/>
            <person name="Chida K."/>
            <person name="Hakuno F."/>
            <person name="Takahashi S."/>
        </authorList>
    </citation>
    <scope>INTERACTION WITH GKAP1</scope>
</reference>
<reference key="15">
    <citation type="journal article" date="2016" name="Sci. Rep.">
        <title>A novel IRS-1-associated protein, DGKzeta regulates GLUT4 translocation in 3T3-L1 adipocytes.</title>
        <authorList>
            <person name="Liu T."/>
            <person name="Yu B."/>
            <person name="Kakino M."/>
            <person name="Fujimoto H."/>
            <person name="Ando Y."/>
            <person name="Hakuno F."/>
            <person name="Takahashi S.I."/>
        </authorList>
    </citation>
    <scope>INTERACTION WITH DGKZ</scope>
</reference>
<comment type="function">
    <text evidence="1 10 11 17">Signaling adapter protein that participates in the signal transduction from two prominent receptor tyrosine kinases, insulin receptor/INSR and insulin-like growth factor I receptor/IGF1R (PubMed:12399410). Plays therefore an important role in development, growth, glucose homeostasis as well as lipid metabolism. Upon phosphorylation by the insulin receptor, functions as a signaling scaffold that propagates insulin action through binding to SH2 domain-containing proteins including the p85 regulatory subunit of PI3K, NCK1, NCK2, GRB2 or SHP2 (PubMed:1380456). Recruitment of GRB2 leads to the activation of the guanine nucleotide exchange factor SOS1 which in turn triggers the Ras/Raf/MEK/MAPK signaling cascade (PubMed:8491186). Activation of the PI3K/AKT pathway is responsible for most of insulin metabolic effects in the cell, and the Ras/Raf/MEK/MAPK is involved in the regulation of gene expression and in cooperation with the PI3K pathway regulates cell growth and differentiation (By similarity). Acts a positive regulator of the Wnt/beta-catenin signaling pathway through suppression of DVL2 autophagy-mediated degradation leading to cell proliferation (By similarity).</text>
</comment>
<comment type="subunit">
    <text evidence="1 2 6 8 11 13 14 17">Interacts with SOCS7 (By similarity). Interacts (via IRS-type PTB domain) with IGF1R and INSR (via the tyrosine-phosphorylated NPXY motif) (By similarity). Interacts with UBTF, FER and PIK3CA (By similarity). Interacts (via phosphorylated YXXM motifs) with PIK3R1 (PubMed:1380456). Interacts with ROCK1 (PubMed:11739394). Interacts (via PH domain) with PHIP (PubMed:11018022). Interacts with GRB2 (PubMed:8491186). Interacts with ALK (By similarity). Interacts with EIF2AK2/PKR (By similarity). Interacts with GKAP1 (PubMed:25586176). Interacts with DGKZ in the absence of insulin; insulin stimulation decreases this interaction (PubMed:27739494). Found in a ternary complex with DGKZ and PIP5K1A in the absence of insulin stimulation (By similarity). Interacts with SQSTM1; the interaction is disrupted by the presence of tensin TNS2 (By similarity). Interacts with NCK1 (via SH2 domain). Interacts with NCK2 (via SH3 domain) (By similarity). Interacts with SH2B1; this interaction enhances leptin-induced activation of the PI3-kinase pathway (By similarity). Interacts with DVL2; this interaction promotes the Wnt/beta-catenin signaling pathway (By similarity). Interacts with JAK1 (By similarity).</text>
</comment>
<comment type="interaction">
    <interactant intactId="EBI-520230">
        <id>P35570</id>
    </interactant>
    <interactant intactId="EBI-919825">
        <id>Q9EPH8</id>
        <label>Pabpc1</label>
    </interactant>
    <organismsDiffer>false</organismsDiffer>
    <experiments>2</experiments>
</comment>
<comment type="interaction">
    <interactant intactId="EBI-520230">
        <id>P35570</id>
    </interactant>
    <interactant intactId="EBI-518443">
        <id>Q63787</id>
        <label>Pik3r1</label>
    </interactant>
    <organismsDiffer>false</organismsDiffer>
    <experiments>2</experiments>
</comment>
<comment type="interaction">
    <interactant intactId="EBI-520230">
        <id>P35570</id>
    </interactant>
    <interactant intactId="EBI-524514">
        <id>P39688</id>
        <label>Fyn</label>
    </interactant>
    <organismsDiffer>true</organismsDiffer>
    <experiments>4</experiments>
</comment>
<comment type="interaction">
    <interactant intactId="EBI-520230">
        <id>P35570</id>
    </interactant>
    <interactant intactId="EBI-401755">
        <id>P62993</id>
        <label>GRB2</label>
    </interactant>
    <organismsDiffer>true</organismsDiffer>
    <experiments>5</experiments>
</comment>
<comment type="interaction">
    <interactant intactId="EBI-520230">
        <id>P35570</id>
    </interactant>
    <interactant intactId="EBI-475899">
        <id>P06213</id>
        <label>INSR</label>
    </interactant>
    <organismsDiffer>true</organismsDiffer>
    <experiments>5</experiments>
</comment>
<comment type="interaction">
    <interactant intactId="EBI-520230">
        <id>P35570</id>
    </interactant>
    <interactant intactId="EBI-1369766">
        <id>Q8VDD9</id>
        <label>Phip</label>
    </interactant>
    <organismsDiffer>true</organismsDiffer>
    <experiments>2</experiments>
</comment>
<comment type="interaction">
    <interactant intactId="EBI-520230">
        <id>P35570</id>
    </interactant>
    <interactant intactId="EBI-79464">
        <id>P27986</id>
        <label>PIK3R1</label>
    </interactant>
    <organismsDiffer>true</organismsDiffer>
    <experiments>2</experiments>
</comment>
<comment type="interaction">
    <interactant intactId="EBI-520230">
        <id>P35570</id>
    </interactant>
    <interactant intactId="EBI-374762">
        <id>Q04759</id>
        <label>PRKCQ</label>
    </interactant>
    <organismsDiffer>true</organismsDiffer>
    <experiments>2</experiments>
</comment>
<comment type="interaction">
    <interactant intactId="EBI-520230">
        <id>P35570</id>
    </interactant>
    <interactant intactId="EBI-968788">
        <id>P18031</id>
        <label>PTPN1</label>
    </interactant>
    <organismsDiffer>true</organismsDiffer>
    <experiments>3</experiments>
</comment>
<comment type="interaction">
    <interactant intactId="EBI-520230">
        <id>P35570</id>
    </interactant>
    <interactant intactId="EBI-297779">
        <id>Q06124</id>
        <label>PTPN11</label>
    </interactant>
    <organismsDiffer>true</organismsDiffer>
    <experiments>3</experiments>
</comment>
<comment type="interaction">
    <interactant intactId="EBI-520230">
        <id>P35570</id>
    </interactant>
    <interactant intactId="EBI-287091">
        <id>Q13625-2</id>
        <label>TP53BP2</label>
    </interactant>
    <organismsDiffer>true</organismsDiffer>
    <experiments>4</experiments>
</comment>
<comment type="subcellular location">
    <subcellularLocation>
        <location evidence="1">Cytoplasm</location>
    </subcellularLocation>
    <subcellularLocation>
        <location evidence="1">Nucleus</location>
    </subcellularLocation>
    <text evidence="1">Nuclear or cytoplasmic localization of IRS1 correlates with the transition from proliferation to chondrogenic differentiation.</text>
</comment>
<comment type="PTM">
    <text evidence="1 2 7 9 15">Serine phosphorylation of IRS1 is a mechanism for insulin resistance. Ser-307 phosphorylation inhibits insulin action through disruption of IRS1 interaction with the insulin receptor, and Ser-789 phosphorylation is increased in the liver of insulin-resistant rats (PubMed:11606564, PubMed:12006586, PubMed:7504175). Phosphorylation of Tyr-895 is required for GRB2-binding. Phosphorylated by ALK. Phosphorylated at Ser-265, Ser-302, Ser-632 and Ser-1100 by RPS6KB1; phosphorylation induces accelerated degradation of IRS1 (By similarity). Phosphorylated on tyrosine residues in response to insulin (By similarity). In skeletal muscles, dephosphorylated on Tyr-608 by TNS2 under anabolic conditions; dephosphorylation results in the proteasomal degradation of IRS1 (By similarity).</text>
</comment>
<comment type="PTM">
    <text evidence="1">Ubiquitinated by the Cul7-RING(FBXW8) complex in a mTOR-dependent manner, leading to its degradation: the Cul7-RING(FBXW8) complex recognizes and binds IRS1 previously phosphorylated by S6 kinase (RPS6KB1 or RPS6KB2). Ubiquitinated by TRAF4 through 'Lys-29' linkage; this ubiquitination regulates the interaction of IRS1 with IGFR and IRS1 tyrosine phosphorylation upon IGF1 stimulation (By similarity).</text>
</comment>
<comment type="PTM">
    <text evidence="1">S-nitrosylation at by BLVRB inhibits its activity.</text>
</comment>
<evidence type="ECO:0000250" key="1">
    <source>
        <dbReference type="UniProtKB" id="P35568"/>
    </source>
</evidence>
<evidence type="ECO:0000250" key="2">
    <source>
        <dbReference type="UniProtKB" id="P35569"/>
    </source>
</evidence>
<evidence type="ECO:0000255" key="3">
    <source>
        <dbReference type="PROSITE-ProRule" id="PRU00145"/>
    </source>
</evidence>
<evidence type="ECO:0000255" key="4">
    <source>
        <dbReference type="PROSITE-ProRule" id="PRU00389"/>
    </source>
</evidence>
<evidence type="ECO:0000256" key="5">
    <source>
        <dbReference type="SAM" id="MobiDB-lite"/>
    </source>
</evidence>
<evidence type="ECO:0000269" key="6">
    <source>
    </source>
</evidence>
<evidence type="ECO:0000269" key="7">
    <source>
    </source>
</evidence>
<evidence type="ECO:0000269" key="8">
    <source>
    </source>
</evidence>
<evidence type="ECO:0000269" key="9">
    <source>
    </source>
</evidence>
<evidence type="ECO:0000269" key="10">
    <source>
    </source>
</evidence>
<evidence type="ECO:0000269" key="11">
    <source>
    </source>
</evidence>
<evidence type="ECO:0000269" key="12">
    <source>
    </source>
</evidence>
<evidence type="ECO:0000269" key="13">
    <source>
    </source>
</evidence>
<evidence type="ECO:0000269" key="14">
    <source>
    </source>
</evidence>
<evidence type="ECO:0000269" key="15">
    <source>
    </source>
</evidence>
<evidence type="ECO:0000269" key="16">
    <source>
    </source>
</evidence>
<evidence type="ECO:0000269" key="17">
    <source>
    </source>
</evidence>
<evidence type="ECO:0000305" key="18"/>
<evidence type="ECO:0007744" key="19">
    <source>
    </source>
</evidence>
<keyword id="KW-0002">3D-structure</keyword>
<keyword id="KW-0963">Cytoplasm</keyword>
<keyword id="KW-0903">Direct protein sequencing</keyword>
<keyword id="KW-1017">Isopeptide bond</keyword>
<keyword id="KW-0539">Nucleus</keyword>
<keyword id="KW-0597">Phosphoprotein</keyword>
<keyword id="KW-1185">Reference proteome</keyword>
<keyword id="KW-0677">Repeat</keyword>
<keyword id="KW-0702">S-nitrosylation</keyword>
<keyword id="KW-0807">Transducer</keyword>
<keyword id="KW-0832">Ubl conjugation</keyword>
<dbReference type="EMBL" id="X58375">
    <property type="protein sequence ID" value="CAA41264.1"/>
    <property type="molecule type" value="mRNA"/>
</dbReference>
<dbReference type="PIR" id="S16948">
    <property type="entry name" value="S16948"/>
</dbReference>
<dbReference type="RefSeq" id="NP_037101.1">
    <property type="nucleotide sequence ID" value="NM_012969.1"/>
</dbReference>
<dbReference type="PDB" id="5WRK">
    <property type="method" value="X-ray"/>
    <property type="resolution" value="2.62 A"/>
    <property type="chains" value="P=607-614"/>
</dbReference>
<dbReference type="PDB" id="5WRL">
    <property type="method" value="X-ray"/>
    <property type="resolution" value="3.10 A"/>
    <property type="chains" value="P=627-634"/>
</dbReference>
<dbReference type="PDB" id="5WRM">
    <property type="method" value="X-ray"/>
    <property type="resolution" value="2.60 A"/>
    <property type="chains" value="P=657-664"/>
</dbReference>
<dbReference type="PDBsum" id="5WRK"/>
<dbReference type="PDBsum" id="5WRL"/>
<dbReference type="PDBsum" id="5WRM"/>
<dbReference type="BMRB" id="P35570"/>
<dbReference type="SMR" id="P35570"/>
<dbReference type="BioGRID" id="247500">
    <property type="interactions" value="14"/>
</dbReference>
<dbReference type="CORUM" id="P35570"/>
<dbReference type="DIP" id="DIP-664N"/>
<dbReference type="ELM" id="P35570"/>
<dbReference type="FunCoup" id="P35570">
    <property type="interactions" value="683"/>
</dbReference>
<dbReference type="IntAct" id="P35570">
    <property type="interactions" value="23"/>
</dbReference>
<dbReference type="MINT" id="P35570"/>
<dbReference type="STRING" id="10116.ENSRNOP00000019579"/>
<dbReference type="BindingDB" id="P35570"/>
<dbReference type="ChEMBL" id="CHEMBL1163110"/>
<dbReference type="GlyGen" id="P35570">
    <property type="glycosylation" value="5 sites, 1 O-linked glycan (4 sites)"/>
</dbReference>
<dbReference type="iPTMnet" id="P35570"/>
<dbReference type="PhosphoSitePlus" id="P35570"/>
<dbReference type="PaxDb" id="10116-ENSRNOP00000019579"/>
<dbReference type="GeneID" id="25467"/>
<dbReference type="KEGG" id="rno:25467"/>
<dbReference type="UCSC" id="RGD:2922">
    <property type="organism name" value="rat"/>
</dbReference>
<dbReference type="AGR" id="RGD:2922"/>
<dbReference type="CTD" id="3667"/>
<dbReference type="RGD" id="2922">
    <property type="gene designation" value="Irs1"/>
</dbReference>
<dbReference type="eggNOG" id="ENOG502QUNU">
    <property type="taxonomic scope" value="Eukaryota"/>
</dbReference>
<dbReference type="InParanoid" id="P35570"/>
<dbReference type="PhylomeDB" id="P35570"/>
<dbReference type="Reactome" id="R-RNO-109704">
    <property type="pathway name" value="PI3K Cascade"/>
</dbReference>
<dbReference type="Reactome" id="R-RNO-112399">
    <property type="pathway name" value="IRS-mediated signalling"/>
</dbReference>
<dbReference type="Reactome" id="R-RNO-112412">
    <property type="pathway name" value="SOS-mediated signalling"/>
</dbReference>
<dbReference type="Reactome" id="R-RNO-1257604">
    <property type="pathway name" value="PIP3 activates AKT signaling"/>
</dbReference>
<dbReference type="Reactome" id="R-RNO-1266695">
    <property type="pathway name" value="Interleukin-7 signaling"/>
</dbReference>
<dbReference type="Reactome" id="R-RNO-198203">
    <property type="pathway name" value="PI3K/AKT activation"/>
</dbReference>
<dbReference type="Reactome" id="R-RNO-201556">
    <property type="pathway name" value="Signaling by ALK"/>
</dbReference>
<dbReference type="Reactome" id="R-RNO-2428928">
    <property type="pathway name" value="IRS-related events triggered by IGF1R"/>
</dbReference>
<dbReference type="Reactome" id="R-RNO-5673001">
    <property type="pathway name" value="RAF/MAP kinase cascade"/>
</dbReference>
<dbReference type="Reactome" id="R-RNO-6811558">
    <property type="pathway name" value="PI5P, PP2A and IER3 Regulate PI3K/AKT Signaling"/>
</dbReference>
<dbReference type="Reactome" id="R-RNO-74713">
    <property type="pathway name" value="IRS activation"/>
</dbReference>
<dbReference type="Reactome" id="R-RNO-74749">
    <property type="pathway name" value="Signal attenuation"/>
</dbReference>
<dbReference type="Reactome" id="R-RNO-9842663">
    <property type="pathway name" value="Signaling by LTK"/>
</dbReference>
<dbReference type="PRO" id="PR:P35570"/>
<dbReference type="Proteomes" id="UP000002494">
    <property type="component" value="Unplaced"/>
</dbReference>
<dbReference type="GO" id="GO:0005901">
    <property type="term" value="C:caveola"/>
    <property type="evidence" value="ECO:0000266"/>
    <property type="project" value="RGD"/>
</dbReference>
<dbReference type="GO" id="GO:0036064">
    <property type="term" value="C:ciliary basal body"/>
    <property type="evidence" value="ECO:0000266"/>
    <property type="project" value="RGD"/>
</dbReference>
<dbReference type="GO" id="GO:0005737">
    <property type="term" value="C:cytoplasm"/>
    <property type="evidence" value="ECO:0000250"/>
    <property type="project" value="UniProtKB"/>
</dbReference>
<dbReference type="GO" id="GO:0005829">
    <property type="term" value="C:cytosol"/>
    <property type="evidence" value="ECO:0000318"/>
    <property type="project" value="GO_Central"/>
</dbReference>
<dbReference type="GO" id="GO:0005899">
    <property type="term" value="C:insulin receptor complex"/>
    <property type="evidence" value="ECO:0000315"/>
    <property type="project" value="BHF-UCL"/>
</dbReference>
<dbReference type="GO" id="GO:0043231">
    <property type="term" value="C:intracellular membrane-bounded organelle"/>
    <property type="evidence" value="ECO:0000250"/>
    <property type="project" value="UniProtKB"/>
</dbReference>
<dbReference type="GO" id="GO:0005634">
    <property type="term" value="C:nucleus"/>
    <property type="evidence" value="ECO:0000250"/>
    <property type="project" value="UniProtKB"/>
</dbReference>
<dbReference type="GO" id="GO:0005886">
    <property type="term" value="C:plasma membrane"/>
    <property type="evidence" value="ECO:0000266"/>
    <property type="project" value="RGD"/>
</dbReference>
<dbReference type="GO" id="GO:0005158">
    <property type="term" value="F:insulin receptor binding"/>
    <property type="evidence" value="ECO:0000315"/>
    <property type="project" value="RGD"/>
</dbReference>
<dbReference type="GO" id="GO:0005159">
    <property type="term" value="F:insulin-like growth factor receptor binding"/>
    <property type="evidence" value="ECO:0000353"/>
    <property type="project" value="RGD"/>
</dbReference>
<dbReference type="GO" id="GO:0141038">
    <property type="term" value="F:phosphatidylinositol 3-kinase activator activity"/>
    <property type="evidence" value="ECO:0000266"/>
    <property type="project" value="RGD"/>
</dbReference>
<dbReference type="GO" id="GO:0043548">
    <property type="term" value="F:phosphatidylinositol 3-kinase binding"/>
    <property type="evidence" value="ECO:0000314"/>
    <property type="project" value="UniProtKB"/>
</dbReference>
<dbReference type="GO" id="GO:0001784">
    <property type="term" value="F:phosphotyrosine residue binding"/>
    <property type="evidence" value="ECO:0000266"/>
    <property type="project" value="RGD"/>
</dbReference>
<dbReference type="GO" id="GO:0019904">
    <property type="term" value="F:protein domain specific binding"/>
    <property type="evidence" value="ECO:0000353"/>
    <property type="project" value="RGD"/>
</dbReference>
<dbReference type="GO" id="GO:0019901">
    <property type="term" value="F:protein kinase binding"/>
    <property type="evidence" value="ECO:0000353"/>
    <property type="project" value="RGD"/>
</dbReference>
<dbReference type="GO" id="GO:0005080">
    <property type="term" value="F:protein kinase C binding"/>
    <property type="evidence" value="ECO:0000353"/>
    <property type="project" value="BHF-UCL"/>
</dbReference>
<dbReference type="GO" id="GO:0044877">
    <property type="term" value="F:protein-containing complex binding"/>
    <property type="evidence" value="ECO:0000314"/>
    <property type="project" value="RGD"/>
</dbReference>
<dbReference type="GO" id="GO:0030674">
    <property type="term" value="F:protein-macromolecule adaptor activity"/>
    <property type="evidence" value="ECO:0000266"/>
    <property type="project" value="RGD"/>
</dbReference>
<dbReference type="GO" id="GO:0042169">
    <property type="term" value="F:SH2 domain binding"/>
    <property type="evidence" value="ECO:0000353"/>
    <property type="project" value="UniProtKB"/>
</dbReference>
<dbReference type="GO" id="GO:0035591">
    <property type="term" value="F:signaling adaptor activity"/>
    <property type="evidence" value="ECO:0000266"/>
    <property type="project" value="RGD"/>
</dbReference>
<dbReference type="GO" id="GO:0030159">
    <property type="term" value="F:signaling receptor complex adaptor activity"/>
    <property type="evidence" value="ECO:0000266"/>
    <property type="project" value="RGD"/>
</dbReference>
<dbReference type="GO" id="GO:0005068">
    <property type="term" value="F:transmembrane receptor protein tyrosine kinase adaptor activity"/>
    <property type="evidence" value="ECO:0000315"/>
    <property type="project" value="BHF-UCL"/>
</dbReference>
<dbReference type="GO" id="GO:0016477">
    <property type="term" value="P:cell migration"/>
    <property type="evidence" value="ECO:0000266"/>
    <property type="project" value="RGD"/>
</dbReference>
<dbReference type="GO" id="GO:1904385">
    <property type="term" value="P:cellular response to angiotensin"/>
    <property type="evidence" value="ECO:0000270"/>
    <property type="project" value="RGD"/>
</dbReference>
<dbReference type="GO" id="GO:1990416">
    <property type="term" value="P:cellular response to brain-derived neurotrophic factor stimulus"/>
    <property type="evidence" value="ECO:0000270"/>
    <property type="project" value="RGD"/>
</dbReference>
<dbReference type="GO" id="GO:0071398">
    <property type="term" value="P:cellular response to fatty acid"/>
    <property type="evidence" value="ECO:0000266"/>
    <property type="project" value="RGD"/>
</dbReference>
<dbReference type="GO" id="GO:0032869">
    <property type="term" value="P:cellular response to insulin stimulus"/>
    <property type="evidence" value="ECO:0000266"/>
    <property type="project" value="RGD"/>
</dbReference>
<dbReference type="GO" id="GO:0071478">
    <property type="term" value="P:cellular response to radiation"/>
    <property type="evidence" value="ECO:0000270"/>
    <property type="project" value="RGD"/>
</dbReference>
<dbReference type="GO" id="GO:0019221">
    <property type="term" value="P:cytokine-mediated signaling pathway"/>
    <property type="evidence" value="ECO:0000266"/>
    <property type="project" value="RGD"/>
</dbReference>
<dbReference type="GO" id="GO:0010631">
    <property type="term" value="P:epithelial cell migration"/>
    <property type="evidence" value="ECO:0000266"/>
    <property type="project" value="RGD"/>
</dbReference>
<dbReference type="GO" id="GO:0008286">
    <property type="term" value="P:insulin receptor signaling pathway"/>
    <property type="evidence" value="ECO:0000314"/>
    <property type="project" value="BHF-UCL"/>
</dbReference>
<dbReference type="GO" id="GO:0048009">
    <property type="term" value="P:insulin-like growth factor receptor signaling pathway"/>
    <property type="evidence" value="ECO:0000250"/>
    <property type="project" value="UniProtKB"/>
</dbReference>
<dbReference type="GO" id="GO:0016042">
    <property type="term" value="P:lipid catabolic process"/>
    <property type="evidence" value="ECO:0000266"/>
    <property type="project" value="RGD"/>
</dbReference>
<dbReference type="GO" id="GO:0030879">
    <property type="term" value="P:mammary gland development"/>
    <property type="evidence" value="ECO:0000266"/>
    <property type="project" value="RGD"/>
</dbReference>
<dbReference type="GO" id="GO:0046627">
    <property type="term" value="P:negative regulation of insulin receptor signaling pathway"/>
    <property type="evidence" value="ECO:0000315"/>
    <property type="project" value="BHF-UCL"/>
</dbReference>
<dbReference type="GO" id="GO:0046676">
    <property type="term" value="P:negative regulation of insulin secretion"/>
    <property type="evidence" value="ECO:0000315"/>
    <property type="project" value="BHF-UCL"/>
</dbReference>
<dbReference type="GO" id="GO:0090275">
    <property type="term" value="P:negative regulation of somatostatin secretion"/>
    <property type="evidence" value="ECO:0000315"/>
    <property type="project" value="BHF-UCL"/>
</dbReference>
<dbReference type="GO" id="GO:0043491">
    <property type="term" value="P:phosphatidylinositol 3-kinase/protein kinase B signal transduction"/>
    <property type="evidence" value="ECO:0000266"/>
    <property type="project" value="RGD"/>
</dbReference>
<dbReference type="GO" id="GO:0046326">
    <property type="term" value="P:positive regulation of D-glucose import"/>
    <property type="evidence" value="ECO:0000266"/>
    <property type="project" value="RGD"/>
</dbReference>
<dbReference type="GO" id="GO:0010634">
    <property type="term" value="P:positive regulation of epithelial cell migration"/>
    <property type="evidence" value="ECO:0000266"/>
    <property type="project" value="RGD"/>
</dbReference>
<dbReference type="GO" id="GO:0032000">
    <property type="term" value="P:positive regulation of fatty acid beta-oxidation"/>
    <property type="evidence" value="ECO:0000266"/>
    <property type="project" value="RGD"/>
</dbReference>
<dbReference type="GO" id="GO:0070094">
    <property type="term" value="P:positive regulation of glucagon secretion"/>
    <property type="evidence" value="ECO:0000315"/>
    <property type="project" value="BHF-UCL"/>
</dbReference>
<dbReference type="GO" id="GO:0010907">
    <property type="term" value="P:positive regulation of glucose metabolic process"/>
    <property type="evidence" value="ECO:0000266"/>
    <property type="project" value="RGD"/>
</dbReference>
<dbReference type="GO" id="GO:0045725">
    <property type="term" value="P:positive regulation of glycogen biosynthetic process"/>
    <property type="evidence" value="ECO:0000266"/>
    <property type="project" value="RGD"/>
</dbReference>
<dbReference type="GO" id="GO:0046628">
    <property type="term" value="P:positive regulation of insulin receptor signaling pathway"/>
    <property type="evidence" value="ECO:0000315"/>
    <property type="project" value="BHF-UCL"/>
</dbReference>
<dbReference type="GO" id="GO:0002053">
    <property type="term" value="P:positive regulation of mesenchymal cell proliferation"/>
    <property type="evidence" value="ECO:0000266"/>
    <property type="project" value="RGD"/>
</dbReference>
<dbReference type="GO" id="GO:0051897">
    <property type="term" value="P:positive regulation of phosphatidylinositol 3-kinase/protein kinase B signal transduction"/>
    <property type="evidence" value="ECO:0000314"/>
    <property type="project" value="UniProtKB"/>
</dbReference>
<dbReference type="GO" id="GO:0042327">
    <property type="term" value="P:positive regulation of phosphorylation"/>
    <property type="evidence" value="ECO:0000314"/>
    <property type="project" value="BHF-UCL"/>
</dbReference>
<dbReference type="GO" id="GO:0034504">
    <property type="term" value="P:protein localization to nucleus"/>
    <property type="evidence" value="ECO:0000266"/>
    <property type="project" value="RGD"/>
</dbReference>
<dbReference type="GO" id="GO:0010468">
    <property type="term" value="P:regulation of gene expression"/>
    <property type="evidence" value="ECO:0000266"/>
    <property type="project" value="RGD"/>
</dbReference>
<dbReference type="GO" id="GO:0014823">
    <property type="term" value="P:response to activity"/>
    <property type="evidence" value="ECO:0000270"/>
    <property type="project" value="RGD"/>
</dbReference>
<dbReference type="GO" id="GO:0031000">
    <property type="term" value="P:response to caffeine"/>
    <property type="evidence" value="ECO:0000314"/>
    <property type="project" value="RGD"/>
</dbReference>
<dbReference type="GO" id="GO:0045471">
    <property type="term" value="P:response to ethanol"/>
    <property type="evidence" value="ECO:0000314"/>
    <property type="project" value="RGD"/>
</dbReference>
<dbReference type="GO" id="GO:0032868">
    <property type="term" value="P:response to insulin"/>
    <property type="evidence" value="ECO:0000266"/>
    <property type="project" value="RGD"/>
</dbReference>
<dbReference type="CDD" id="cd01257">
    <property type="entry name" value="PH_IRS"/>
    <property type="match status" value="1"/>
</dbReference>
<dbReference type="CDD" id="cd01204">
    <property type="entry name" value="PTB_IRS"/>
    <property type="match status" value="1"/>
</dbReference>
<dbReference type="FunFam" id="2.30.29.30:FF:000029">
    <property type="entry name" value="Insulin receptor substrate 1"/>
    <property type="match status" value="1"/>
</dbReference>
<dbReference type="FunFam" id="2.30.29.30:FF:000129">
    <property type="entry name" value="Insulin receptor substrate 1"/>
    <property type="match status" value="1"/>
</dbReference>
<dbReference type="Gene3D" id="2.30.29.30">
    <property type="entry name" value="Pleckstrin-homology domain (PH domain)/Phosphotyrosine-binding domain (PTB)"/>
    <property type="match status" value="2"/>
</dbReference>
<dbReference type="InterPro" id="IPR039011">
    <property type="entry name" value="IRS"/>
</dbReference>
<dbReference type="InterPro" id="IPR002404">
    <property type="entry name" value="IRS_PTB"/>
</dbReference>
<dbReference type="InterPro" id="IPR011993">
    <property type="entry name" value="PH-like_dom_sf"/>
</dbReference>
<dbReference type="InterPro" id="IPR001849">
    <property type="entry name" value="PH_domain"/>
</dbReference>
<dbReference type="PANTHER" id="PTHR10614">
    <property type="entry name" value="INSULIN RECEPTOR SUBSTRATE"/>
    <property type="match status" value="1"/>
</dbReference>
<dbReference type="PANTHER" id="PTHR10614:SF11">
    <property type="entry name" value="INSULIN RECEPTOR SUBSTRATE 1"/>
    <property type="match status" value="1"/>
</dbReference>
<dbReference type="Pfam" id="PF02174">
    <property type="entry name" value="IRS"/>
    <property type="match status" value="1"/>
</dbReference>
<dbReference type="Pfam" id="PF00169">
    <property type="entry name" value="PH"/>
    <property type="match status" value="1"/>
</dbReference>
<dbReference type="PRINTS" id="PR00628">
    <property type="entry name" value="INSULINRSI"/>
</dbReference>
<dbReference type="SMART" id="SM01244">
    <property type="entry name" value="IRS"/>
    <property type="match status" value="1"/>
</dbReference>
<dbReference type="SMART" id="SM00233">
    <property type="entry name" value="PH"/>
    <property type="match status" value="1"/>
</dbReference>
<dbReference type="SMART" id="SM00310">
    <property type="entry name" value="PTBI"/>
    <property type="match status" value="1"/>
</dbReference>
<dbReference type="SUPFAM" id="SSF50729">
    <property type="entry name" value="PH domain-like"/>
    <property type="match status" value="2"/>
</dbReference>
<dbReference type="PROSITE" id="PS51064">
    <property type="entry name" value="IRS_PTB"/>
    <property type="match status" value="1"/>
</dbReference>
<dbReference type="PROSITE" id="PS50003">
    <property type="entry name" value="PH_DOMAIN"/>
    <property type="match status" value="1"/>
</dbReference>
<proteinExistence type="evidence at protein level"/>